<dbReference type="EC" id="2.5.1.18"/>
<dbReference type="EMBL" id="X68304">
    <property type="protein sequence ID" value="CAA48376.1"/>
    <property type="molecule type" value="mRNA"/>
</dbReference>
<dbReference type="PIR" id="S36835">
    <property type="entry name" value="S36835"/>
</dbReference>
<dbReference type="SMR" id="P42769"/>
<dbReference type="ExpressionAtlas" id="P42769">
    <property type="expression patterns" value="baseline and differential"/>
</dbReference>
<dbReference type="GO" id="GO:0005829">
    <property type="term" value="C:cytosol"/>
    <property type="evidence" value="ECO:0007669"/>
    <property type="project" value="UniProtKB-SubCell"/>
</dbReference>
<dbReference type="GO" id="GO:0004364">
    <property type="term" value="F:glutathione transferase activity"/>
    <property type="evidence" value="ECO:0007669"/>
    <property type="project" value="UniProtKB-EC"/>
</dbReference>
<dbReference type="GO" id="GO:0004601">
    <property type="term" value="F:peroxidase activity"/>
    <property type="evidence" value="ECO:0007669"/>
    <property type="project" value="UniProtKB-KW"/>
</dbReference>
<dbReference type="GO" id="GO:0009407">
    <property type="term" value="P:toxin catabolic process"/>
    <property type="evidence" value="ECO:0007669"/>
    <property type="project" value="UniProtKB-ARBA"/>
</dbReference>
<dbReference type="CDD" id="cd03187">
    <property type="entry name" value="GST_C_Phi"/>
    <property type="match status" value="1"/>
</dbReference>
<dbReference type="CDD" id="cd03053">
    <property type="entry name" value="GST_N_Phi"/>
    <property type="match status" value="1"/>
</dbReference>
<dbReference type="FunFam" id="3.40.30.10:FF:000016">
    <property type="entry name" value="Glutathione S-transferase F2"/>
    <property type="match status" value="1"/>
</dbReference>
<dbReference type="Gene3D" id="1.20.1050.10">
    <property type="match status" value="1"/>
</dbReference>
<dbReference type="Gene3D" id="3.40.30.10">
    <property type="entry name" value="Glutaredoxin"/>
    <property type="match status" value="1"/>
</dbReference>
<dbReference type="InterPro" id="IPR010987">
    <property type="entry name" value="Glutathione-S-Trfase_C-like"/>
</dbReference>
<dbReference type="InterPro" id="IPR036282">
    <property type="entry name" value="Glutathione-S-Trfase_C_sf"/>
</dbReference>
<dbReference type="InterPro" id="IPR040079">
    <property type="entry name" value="Glutathione_S-Trfase"/>
</dbReference>
<dbReference type="InterPro" id="IPR004045">
    <property type="entry name" value="Glutathione_S-Trfase_N"/>
</dbReference>
<dbReference type="InterPro" id="IPR004046">
    <property type="entry name" value="GST_C"/>
</dbReference>
<dbReference type="InterPro" id="IPR034347">
    <property type="entry name" value="GST_Phi_C"/>
</dbReference>
<dbReference type="InterPro" id="IPR036249">
    <property type="entry name" value="Thioredoxin-like_sf"/>
</dbReference>
<dbReference type="PANTHER" id="PTHR43900">
    <property type="entry name" value="GLUTATHIONE S-TRANSFERASE RHO"/>
    <property type="match status" value="1"/>
</dbReference>
<dbReference type="PANTHER" id="PTHR43900:SF3">
    <property type="entry name" value="GLUTATHIONE S-TRANSFERASE RHO"/>
    <property type="match status" value="1"/>
</dbReference>
<dbReference type="Pfam" id="PF00043">
    <property type="entry name" value="GST_C"/>
    <property type="match status" value="1"/>
</dbReference>
<dbReference type="Pfam" id="PF02798">
    <property type="entry name" value="GST_N"/>
    <property type="match status" value="1"/>
</dbReference>
<dbReference type="SFLD" id="SFLDS00019">
    <property type="entry name" value="Glutathione_Transferase_(cytos"/>
    <property type="match status" value="1"/>
</dbReference>
<dbReference type="SFLD" id="SFLDG01154">
    <property type="entry name" value="Main.5:_Phi-like"/>
    <property type="match status" value="1"/>
</dbReference>
<dbReference type="SUPFAM" id="SSF47616">
    <property type="entry name" value="GST C-terminal domain-like"/>
    <property type="match status" value="1"/>
</dbReference>
<dbReference type="SUPFAM" id="SSF52833">
    <property type="entry name" value="Thioredoxin-like"/>
    <property type="match status" value="1"/>
</dbReference>
<dbReference type="PROSITE" id="PS50405">
    <property type="entry name" value="GST_CTER"/>
    <property type="match status" value="1"/>
</dbReference>
<dbReference type="PROSITE" id="PS50404">
    <property type="entry name" value="GST_NTER"/>
    <property type="match status" value="1"/>
</dbReference>
<sequence length="218" mass="24364">MVTVKLYGMAYSTCTKRVYTTAKEIGVDVKIVPVDLMKGEHKEPAYLDNYHPFGVIPVLEDEDGTKIYESRAISRYLVAKYGKGSSLLPSPSDPKAYGLFEQAASVEYSSFDPPASSLAYERVFAGMRGLKTNEELAKKYVDTLNAKMDGYERILSKQKYLAGNDFTLADLFHLPYGAMVAQLEPTVLDSKPHVKAWWAASLRVIPGRLLRNSSKEFM</sequence>
<reference key="1">
    <citation type="journal article" date="1993" name="Eur. J. Biochem.">
        <title>A glutathione S-transferase with glutathione-peroxidase activity from Arabidopsis thaliana. Molecular cloning and functional characterization.</title>
        <authorList>
            <person name="Bartling D."/>
            <person name="Radzio R."/>
            <person name="Steiner U."/>
            <person name="Weiler E.W."/>
        </authorList>
    </citation>
    <scope>NUCLEOTIDE SEQUENCE [MRNA]</scope>
    <scope>FUNCTION</scope>
    <source>
        <strain>cv. Landsberg erecta</strain>
        <tissue>Leaf</tissue>
    </source>
</reference>
<reference key="2">
    <citation type="journal article" date="1993" name="Eur. J. Biochem.">
        <authorList>
            <person name="Bartling D."/>
            <person name="Radzio R."/>
            <person name="Steiner U."/>
            <person name="Weiler E.W."/>
        </authorList>
    </citation>
    <scope>ERRATUM OF PUBMED:8375395</scope>
</reference>
<reference key="3">
    <citation type="journal article" date="2002" name="Plant Mol. Biol.">
        <title>Probing the diversity of the Arabidopsis glutathione S-transferase gene family.</title>
        <authorList>
            <person name="Wagner U."/>
            <person name="Edwards R."/>
            <person name="Dixon D.P."/>
            <person name="Mauch F."/>
        </authorList>
    </citation>
    <scope>GENE FAMILY</scope>
    <scope>NOMENCLATURE</scope>
</reference>
<keyword id="KW-0963">Cytoplasm</keyword>
<keyword id="KW-0216">Detoxification</keyword>
<keyword id="KW-0560">Oxidoreductase</keyword>
<keyword id="KW-0575">Peroxidase</keyword>
<keyword id="KW-0346">Stress response</keyword>
<keyword id="KW-0808">Transferase</keyword>
<organism>
    <name type="scientific">Arabidopsis thaliana</name>
    <name type="common">Mouse-ear cress</name>
    <dbReference type="NCBI Taxonomy" id="3702"/>
    <lineage>
        <taxon>Eukaryota</taxon>
        <taxon>Viridiplantae</taxon>
        <taxon>Streptophyta</taxon>
        <taxon>Embryophyta</taxon>
        <taxon>Tracheophyta</taxon>
        <taxon>Spermatophyta</taxon>
        <taxon>Magnoliopsida</taxon>
        <taxon>eudicotyledons</taxon>
        <taxon>Gunneridae</taxon>
        <taxon>Pentapetalae</taxon>
        <taxon>rosids</taxon>
        <taxon>malvids</taxon>
        <taxon>Brassicales</taxon>
        <taxon>Brassicaceae</taxon>
        <taxon>Camelineae</taxon>
        <taxon>Arabidopsis</taxon>
    </lineage>
</organism>
<protein>
    <recommendedName>
        <fullName>Glutathione S-transferase PM239X14</fullName>
        <ecNumber>2.5.1.18</ecNumber>
    </recommendedName>
    <alternativeName>
        <fullName>GST class-phi</fullName>
    </alternativeName>
</protein>
<name>GSTF1_ARATH</name>
<proteinExistence type="evidence at transcript level"/>
<evidence type="ECO:0000250" key="1"/>
<evidence type="ECO:0000269" key="2">
    <source>
    </source>
</evidence>
<evidence type="ECO:0000305" key="3"/>
<accession>P42769</accession>
<comment type="function">
    <text evidence="2">Specifically catalyzes the conjugation of synthetic 1-chloro-2,4-ditrobenzene to GSH. Also functions as a glutathione peroxidase, converting linoleate oxidation products into their corresponding hydroxyacids. This enzyme may thus serve to protect the cell from oxygen toxicity as well as from exogenous toxins such as herbicides.</text>
</comment>
<comment type="catalytic activity">
    <reaction>
        <text>RX + glutathione = an S-substituted glutathione + a halide anion + H(+)</text>
        <dbReference type="Rhea" id="RHEA:16437"/>
        <dbReference type="ChEBI" id="CHEBI:15378"/>
        <dbReference type="ChEBI" id="CHEBI:16042"/>
        <dbReference type="ChEBI" id="CHEBI:17792"/>
        <dbReference type="ChEBI" id="CHEBI:57925"/>
        <dbReference type="ChEBI" id="CHEBI:90779"/>
        <dbReference type="EC" id="2.5.1.18"/>
    </reaction>
</comment>
<comment type="subcellular location">
    <subcellularLocation>
        <location evidence="3">Cytoplasm</location>
        <location evidence="3">Cytosol</location>
    </subcellularLocation>
</comment>
<comment type="tissue specificity">
    <text>Expressed in vegetative rosettes.</text>
</comment>
<comment type="developmental stage">
    <text>Expressed up until the first flowering buds, after which, levels dramatically decrease.</text>
</comment>
<comment type="similarity">
    <text evidence="3">Belongs to the GST superfamily. Phi family.</text>
</comment>
<comment type="caution">
    <text evidence="3">This protein probably does not originate from A.thaliana, rather it resembles fungal GTSs.</text>
</comment>
<feature type="chain" id="PRO_0000185849" description="Glutathione S-transferase PM239X14">
    <location>
        <begin position="1"/>
        <end position="218"/>
    </location>
</feature>
<feature type="domain" description="GST N-terminal">
    <location>
        <begin position="2"/>
        <end position="85"/>
    </location>
</feature>
<feature type="domain" description="GST C-terminal">
    <location>
        <begin position="93"/>
        <end position="218"/>
    </location>
</feature>
<feature type="binding site" evidence="1">
    <location>
        <begin position="12"/>
        <end position="13"/>
    </location>
    <ligand>
        <name>glutathione</name>
        <dbReference type="ChEBI" id="CHEBI:57925"/>
    </ligand>
</feature>
<feature type="binding site" evidence="1">
    <location>
        <begin position="41"/>
        <end position="42"/>
    </location>
    <ligand>
        <name>glutathione</name>
        <dbReference type="ChEBI" id="CHEBI:57925"/>
    </ligand>
</feature>
<feature type="binding site" evidence="1">
    <location>
        <begin position="55"/>
        <end position="56"/>
    </location>
    <ligand>
        <name>glutathione</name>
        <dbReference type="ChEBI" id="CHEBI:57925"/>
    </ligand>
</feature>
<feature type="binding site" evidence="1">
    <location>
        <begin position="69"/>
        <end position="70"/>
    </location>
    <ligand>
        <name>glutathione</name>
        <dbReference type="ChEBI" id="CHEBI:57925"/>
    </ligand>
</feature>